<feature type="chain" id="PRO_0000286746" description="Putative 2-aminoethylphosphonate transport system permease protein PhnU">
    <location>
        <begin position="1"/>
        <end position="286"/>
    </location>
</feature>
<feature type="transmembrane region" description="Helical" evidence="1">
    <location>
        <begin position="19"/>
        <end position="39"/>
    </location>
</feature>
<feature type="transmembrane region" description="Helical" evidence="1">
    <location>
        <begin position="76"/>
        <end position="96"/>
    </location>
</feature>
<feature type="transmembrane region" description="Helical" evidence="1">
    <location>
        <begin position="111"/>
        <end position="131"/>
    </location>
</feature>
<feature type="transmembrane region" description="Helical" evidence="1">
    <location>
        <begin position="150"/>
        <end position="170"/>
    </location>
</feature>
<feature type="transmembrane region" description="Helical" evidence="1">
    <location>
        <begin position="202"/>
        <end position="222"/>
    </location>
</feature>
<feature type="transmembrane region" description="Helical" evidence="1">
    <location>
        <begin position="254"/>
        <end position="274"/>
    </location>
</feature>
<feature type="domain" description="ABC transmembrane type-1" evidence="1">
    <location>
        <begin position="68"/>
        <end position="275"/>
    </location>
</feature>
<proteinExistence type="evidence at transcript level"/>
<keyword id="KW-0997">Cell inner membrane</keyword>
<keyword id="KW-1003">Cell membrane</keyword>
<keyword id="KW-0472">Membrane</keyword>
<keyword id="KW-1185">Reference proteome</keyword>
<keyword id="KW-0812">Transmembrane</keyword>
<keyword id="KW-1133">Transmembrane helix</keyword>
<keyword id="KW-0813">Transport</keyword>
<accession>P96064</accession>
<accession>Q7CR33</accession>
<comment type="function">
    <text>Probably part of the PhnSTUV complex (TC 3.A.1.11.5) involved in 2-aminoethylphosphonate import. Probably responsible for the translocation of the substrate across the membrane.</text>
</comment>
<comment type="subcellular location">
    <subcellularLocation>
        <location evidence="3">Cell inner membrane</location>
        <topology evidence="1">Multi-pass membrane protein</topology>
    </subcellularLocation>
</comment>
<comment type="induction">
    <text evidence="2">Induced when inorganic phosphate is limiting; this is controlled by PhoB.</text>
</comment>
<comment type="miscellaneous">
    <text>Maps to a phosphate-starvation-inducible locus previously known as PsiC.</text>
</comment>
<comment type="similarity">
    <text evidence="3">Belongs to the binding-protein-dependent transport system permease family.</text>
</comment>
<name>PHNU_SALTY</name>
<dbReference type="EMBL" id="U69493">
    <property type="protein sequence ID" value="AAB39646.1"/>
    <property type="molecule type" value="Genomic_DNA"/>
</dbReference>
<dbReference type="EMBL" id="AE006468">
    <property type="protein sequence ID" value="AAL19381.1"/>
    <property type="molecule type" value="Genomic_DNA"/>
</dbReference>
<dbReference type="PIR" id="T46951">
    <property type="entry name" value="T46951"/>
</dbReference>
<dbReference type="RefSeq" id="NP_459422.1">
    <property type="nucleotide sequence ID" value="NC_003197.2"/>
</dbReference>
<dbReference type="RefSeq" id="WP_000052716.1">
    <property type="nucleotide sequence ID" value="NC_003197.2"/>
</dbReference>
<dbReference type="SMR" id="P96064"/>
<dbReference type="STRING" id="99287.STM0427"/>
<dbReference type="TCDB" id="3.A.1.11.5">
    <property type="family name" value="the atp-binding cassette (abc) superfamily"/>
</dbReference>
<dbReference type="PaxDb" id="99287-STM0427"/>
<dbReference type="GeneID" id="1251946"/>
<dbReference type="KEGG" id="stm:STM0427"/>
<dbReference type="PATRIC" id="fig|99287.12.peg.456"/>
<dbReference type="HOGENOM" id="CLU_016047_18_0_6"/>
<dbReference type="OMA" id="TPFVMRP"/>
<dbReference type="PhylomeDB" id="P96064"/>
<dbReference type="BioCyc" id="SENT99287:STM0427-MONOMER"/>
<dbReference type="Proteomes" id="UP000001014">
    <property type="component" value="Chromosome"/>
</dbReference>
<dbReference type="GO" id="GO:0005886">
    <property type="term" value="C:plasma membrane"/>
    <property type="evidence" value="ECO:0007669"/>
    <property type="project" value="UniProtKB-SubCell"/>
</dbReference>
<dbReference type="GO" id="GO:0033223">
    <property type="term" value="P:2-aminoethylphosphonate transport"/>
    <property type="evidence" value="ECO:0007669"/>
    <property type="project" value="InterPro"/>
</dbReference>
<dbReference type="GO" id="GO:0055085">
    <property type="term" value="P:transmembrane transport"/>
    <property type="evidence" value="ECO:0007669"/>
    <property type="project" value="InterPro"/>
</dbReference>
<dbReference type="CDD" id="cd06261">
    <property type="entry name" value="TM_PBP2"/>
    <property type="match status" value="1"/>
</dbReference>
<dbReference type="Gene3D" id="1.10.3720.10">
    <property type="entry name" value="MetI-like"/>
    <property type="match status" value="1"/>
</dbReference>
<dbReference type="InterPro" id="IPR017636">
    <property type="entry name" value="AminoethylPonate_ABC_perm-PhnU"/>
</dbReference>
<dbReference type="InterPro" id="IPR000515">
    <property type="entry name" value="MetI-like"/>
</dbReference>
<dbReference type="InterPro" id="IPR035906">
    <property type="entry name" value="MetI-like_sf"/>
</dbReference>
<dbReference type="NCBIfam" id="TIGR03226">
    <property type="entry name" value="PhnU"/>
    <property type="match status" value="1"/>
</dbReference>
<dbReference type="NCBIfam" id="NF011624">
    <property type="entry name" value="PRK15050.1"/>
    <property type="match status" value="1"/>
</dbReference>
<dbReference type="PANTHER" id="PTHR43357">
    <property type="entry name" value="INNER MEMBRANE ABC TRANSPORTER PERMEASE PROTEIN YDCV"/>
    <property type="match status" value="1"/>
</dbReference>
<dbReference type="PANTHER" id="PTHR43357:SF4">
    <property type="entry name" value="INNER MEMBRANE ABC TRANSPORTER PERMEASE PROTEIN YDCV"/>
    <property type="match status" value="1"/>
</dbReference>
<dbReference type="Pfam" id="PF00528">
    <property type="entry name" value="BPD_transp_1"/>
    <property type="match status" value="1"/>
</dbReference>
<dbReference type="SUPFAM" id="SSF161098">
    <property type="entry name" value="MetI-like"/>
    <property type="match status" value="1"/>
</dbReference>
<dbReference type="PROSITE" id="PS50928">
    <property type="entry name" value="ABC_TM1"/>
    <property type="match status" value="1"/>
</dbReference>
<gene>
    <name type="primary">phnU</name>
    <name type="ordered locus">STM0427</name>
</gene>
<protein>
    <recommendedName>
        <fullName>Putative 2-aminoethylphosphonate transport system permease protein PhnU</fullName>
    </recommendedName>
</protein>
<organism>
    <name type="scientific">Salmonella typhimurium (strain LT2 / SGSC1412 / ATCC 700720)</name>
    <dbReference type="NCBI Taxonomy" id="99287"/>
    <lineage>
        <taxon>Bacteria</taxon>
        <taxon>Pseudomonadati</taxon>
        <taxon>Pseudomonadota</taxon>
        <taxon>Gammaproteobacteria</taxon>
        <taxon>Enterobacterales</taxon>
        <taxon>Enterobacteriaceae</taxon>
        <taxon>Salmonella</taxon>
    </lineage>
</organism>
<sequence>MSLILPLEKPALNLRPLLWLLLPLLVLATLFFWPLSLIVEQALRGANGEIGLETFRQVVDSKRFVGALLNTLQIAFFATAGCLLLGSVMSLILVFIPFPGSELIGRVVDTFIALPTFLITLAFTFIYGSAGLLNGTLMSLFAFELPPVDFLYSMQGVILAEITVFTPLVMRPLMAALRQIDKSQLEAASILGAHPLRVIGQVIFPAALPALMAGGSLCLLLTTNEFGIVLFIGAKGVNTLPMMVYSKAILESDYTVACMIALINIVLSLGLFSLYRLAASRTGVRS</sequence>
<reference key="1">
    <citation type="submission" date="1996-09" db="EMBL/GenBank/DDBJ databases">
        <title>Molecular genetic analysis of the Salmonella typhimurium LT2 phnXWRSTUV locus required for 2-aminoethylphosphonate transport and metabolism.</title>
        <authorList>
            <person name="Metcalf W.W."/>
            <person name="Jiang W."/>
            <person name="Wanner B.L."/>
        </authorList>
    </citation>
    <scope>NUCLEOTIDE SEQUENCE [GENOMIC DNA]</scope>
    <source>
        <strain>LT2</strain>
    </source>
</reference>
<reference key="2">
    <citation type="journal article" date="2001" name="Nature">
        <title>Complete genome sequence of Salmonella enterica serovar Typhimurium LT2.</title>
        <authorList>
            <person name="McClelland M."/>
            <person name="Sanderson K.E."/>
            <person name="Spieth J."/>
            <person name="Clifton S.W."/>
            <person name="Latreille P."/>
            <person name="Courtney L."/>
            <person name="Porwollik S."/>
            <person name="Ali J."/>
            <person name="Dante M."/>
            <person name="Du F."/>
            <person name="Hou S."/>
            <person name="Layman D."/>
            <person name="Leonard S."/>
            <person name="Nguyen C."/>
            <person name="Scott K."/>
            <person name="Holmes A."/>
            <person name="Grewal N."/>
            <person name="Mulvaney E."/>
            <person name="Ryan E."/>
            <person name="Sun H."/>
            <person name="Florea L."/>
            <person name="Miller W."/>
            <person name="Stoneking T."/>
            <person name="Nhan M."/>
            <person name="Waterston R."/>
            <person name="Wilson R.K."/>
        </authorList>
    </citation>
    <scope>NUCLEOTIDE SEQUENCE [LARGE SCALE GENOMIC DNA]</scope>
    <source>
        <strain>LT2 / SGSC1412 / ATCC 700720</strain>
    </source>
</reference>
<reference key="3">
    <citation type="journal article" date="1995" name="J. Bacteriol.">
        <title>Molecular cloning, mapping, and regulation of Pho regulon genes for phosphonate breakdown by the phosphonatase pathway of Salmonella typhimurium LT2.</title>
        <authorList>
            <person name="Jiang W."/>
            <person name="Metcalf W.W."/>
            <person name="Lee K.-S."/>
            <person name="Wanner B.L."/>
        </authorList>
    </citation>
    <scope>CLONING</scope>
    <scope>INDUCTION</scope>
    <source>
        <strain>LT2</strain>
    </source>
</reference>
<evidence type="ECO:0000255" key="1">
    <source>
        <dbReference type="PROSITE-ProRule" id="PRU00441"/>
    </source>
</evidence>
<evidence type="ECO:0000269" key="2">
    <source>
    </source>
</evidence>
<evidence type="ECO:0000305" key="3"/>